<gene>
    <name evidence="1" type="primary">bioD</name>
    <name type="ordered locus">BMEII0777</name>
</gene>
<comment type="function">
    <text evidence="1">Catalyzes a mechanistically unusual reaction, the ATP-dependent insertion of CO2 between the N7 and N8 nitrogen atoms of 7,8-diaminopelargonic acid (DAPA, also called 7,8-diammoniononanoate) to form a ureido ring.</text>
</comment>
<comment type="catalytic activity">
    <reaction evidence="1">
        <text>(7R,8S)-7,8-diammoniononanoate + CO2 + ATP = (4R,5S)-dethiobiotin + ADP + phosphate + 3 H(+)</text>
        <dbReference type="Rhea" id="RHEA:15805"/>
        <dbReference type="ChEBI" id="CHEBI:15378"/>
        <dbReference type="ChEBI" id="CHEBI:16526"/>
        <dbReference type="ChEBI" id="CHEBI:30616"/>
        <dbReference type="ChEBI" id="CHEBI:43474"/>
        <dbReference type="ChEBI" id="CHEBI:149469"/>
        <dbReference type="ChEBI" id="CHEBI:149473"/>
        <dbReference type="ChEBI" id="CHEBI:456216"/>
        <dbReference type="EC" id="6.3.3.3"/>
    </reaction>
</comment>
<comment type="cofactor">
    <cofactor evidence="1">
        <name>Mg(2+)</name>
        <dbReference type="ChEBI" id="CHEBI:18420"/>
    </cofactor>
</comment>
<comment type="pathway">
    <text evidence="1">Cofactor biosynthesis; biotin biosynthesis; biotin from 7,8-diaminononanoate: step 1/2.</text>
</comment>
<comment type="subunit">
    <text evidence="1">Homodimer.</text>
</comment>
<comment type="subcellular location">
    <subcellularLocation>
        <location evidence="1">Cytoplasm</location>
    </subcellularLocation>
</comment>
<comment type="similarity">
    <text evidence="1">Belongs to the dethiobiotin synthetase family.</text>
</comment>
<accession>Q8YBV9</accession>
<evidence type="ECO:0000255" key="1">
    <source>
        <dbReference type="HAMAP-Rule" id="MF_00336"/>
    </source>
</evidence>
<reference key="1">
    <citation type="journal article" date="2002" name="Proc. Natl. Acad. Sci. U.S.A.">
        <title>The genome sequence of the facultative intracellular pathogen Brucella melitensis.</title>
        <authorList>
            <person name="DelVecchio V.G."/>
            <person name="Kapatral V."/>
            <person name="Redkar R.J."/>
            <person name="Patra G."/>
            <person name="Mujer C."/>
            <person name="Los T."/>
            <person name="Ivanova N."/>
            <person name="Anderson I."/>
            <person name="Bhattacharyya A."/>
            <person name="Lykidis A."/>
            <person name="Reznik G."/>
            <person name="Jablonski L."/>
            <person name="Larsen N."/>
            <person name="D'Souza M."/>
            <person name="Bernal A."/>
            <person name="Mazur M."/>
            <person name="Goltsman E."/>
            <person name="Selkov E."/>
            <person name="Elzer P.H."/>
            <person name="Hagius S."/>
            <person name="O'Callaghan D."/>
            <person name="Letesson J.-J."/>
            <person name="Haselkorn R."/>
            <person name="Kyrpides N.C."/>
            <person name="Overbeek R."/>
        </authorList>
    </citation>
    <scope>NUCLEOTIDE SEQUENCE [LARGE SCALE GENOMIC DNA]</scope>
    <source>
        <strain>ATCC 23456 / CCUG 17765 / NCTC 10094 / 16M</strain>
    </source>
</reference>
<protein>
    <recommendedName>
        <fullName evidence="1">ATP-dependent dethiobiotin synthetase BioD</fullName>
        <ecNumber evidence="1">6.3.3.3</ecNumber>
    </recommendedName>
    <alternativeName>
        <fullName evidence="1">DTB synthetase</fullName>
        <shortName evidence="1">DTBS</shortName>
    </alternativeName>
    <alternativeName>
        <fullName evidence="1">Dethiobiotin synthase</fullName>
    </alternativeName>
</protein>
<keyword id="KW-0067">ATP-binding</keyword>
<keyword id="KW-0093">Biotin biosynthesis</keyword>
<keyword id="KW-0963">Cytoplasm</keyword>
<keyword id="KW-0436">Ligase</keyword>
<keyword id="KW-0460">Magnesium</keyword>
<keyword id="KW-0479">Metal-binding</keyword>
<keyword id="KW-0547">Nucleotide-binding</keyword>
<feature type="chain" id="PRO_0000187950" description="ATP-dependent dethiobiotin synthetase BioD">
    <location>
        <begin position="1"/>
        <end position="212"/>
    </location>
</feature>
<feature type="active site" evidence="1">
    <location>
        <position position="33"/>
    </location>
</feature>
<feature type="binding site" evidence="1">
    <location>
        <begin position="13"/>
        <end position="18"/>
    </location>
    <ligand>
        <name>ATP</name>
        <dbReference type="ChEBI" id="CHEBI:30616"/>
    </ligand>
</feature>
<feature type="binding site" evidence="1">
    <location>
        <position position="17"/>
    </location>
    <ligand>
        <name>Mg(2+)</name>
        <dbReference type="ChEBI" id="CHEBI:18420"/>
    </ligand>
</feature>
<feature type="binding site" evidence="1">
    <location>
        <position position="37"/>
    </location>
    <ligand>
        <name>substrate</name>
    </ligand>
</feature>
<feature type="binding site" evidence="1">
    <location>
        <begin position="100"/>
        <end position="103"/>
    </location>
    <ligand>
        <name>ATP</name>
        <dbReference type="ChEBI" id="CHEBI:30616"/>
    </ligand>
</feature>
<feature type="binding site" evidence="1">
    <location>
        <position position="100"/>
    </location>
    <ligand>
        <name>Mg(2+)</name>
        <dbReference type="ChEBI" id="CHEBI:18420"/>
    </ligand>
</feature>
<feature type="binding site" evidence="1">
    <location>
        <begin position="184"/>
        <end position="186"/>
    </location>
    <ligand>
        <name>ATP</name>
        <dbReference type="ChEBI" id="CHEBI:30616"/>
    </ligand>
</feature>
<dbReference type="EC" id="6.3.3.3" evidence="1"/>
<dbReference type="EMBL" id="AE008918">
    <property type="protein sequence ID" value="AAL54019.1"/>
    <property type="molecule type" value="Genomic_DNA"/>
</dbReference>
<dbReference type="PIR" id="AH3606">
    <property type="entry name" value="AH3606"/>
</dbReference>
<dbReference type="RefSeq" id="WP_004681846.1">
    <property type="nucleotide sequence ID" value="NZ_GG703779.1"/>
</dbReference>
<dbReference type="SMR" id="Q8YBV9"/>
<dbReference type="GeneID" id="29595233"/>
<dbReference type="KEGG" id="bme:BMEII0777"/>
<dbReference type="KEGG" id="bmel:DK63_2470"/>
<dbReference type="PATRIC" id="fig|224914.52.peg.2589"/>
<dbReference type="eggNOG" id="COG0132">
    <property type="taxonomic scope" value="Bacteria"/>
</dbReference>
<dbReference type="PhylomeDB" id="Q8YBV9"/>
<dbReference type="UniPathway" id="UPA00078">
    <property type="reaction ID" value="UER00161"/>
</dbReference>
<dbReference type="Proteomes" id="UP000000419">
    <property type="component" value="Chromosome II"/>
</dbReference>
<dbReference type="GO" id="GO:0005829">
    <property type="term" value="C:cytosol"/>
    <property type="evidence" value="ECO:0007669"/>
    <property type="project" value="TreeGrafter"/>
</dbReference>
<dbReference type="GO" id="GO:0005524">
    <property type="term" value="F:ATP binding"/>
    <property type="evidence" value="ECO:0007669"/>
    <property type="project" value="UniProtKB-UniRule"/>
</dbReference>
<dbReference type="GO" id="GO:0004141">
    <property type="term" value="F:dethiobiotin synthase activity"/>
    <property type="evidence" value="ECO:0007669"/>
    <property type="project" value="UniProtKB-UniRule"/>
</dbReference>
<dbReference type="GO" id="GO:0000287">
    <property type="term" value="F:magnesium ion binding"/>
    <property type="evidence" value="ECO:0007669"/>
    <property type="project" value="UniProtKB-UniRule"/>
</dbReference>
<dbReference type="GO" id="GO:0009102">
    <property type="term" value="P:biotin biosynthetic process"/>
    <property type="evidence" value="ECO:0007669"/>
    <property type="project" value="UniProtKB-UniRule"/>
</dbReference>
<dbReference type="CDD" id="cd03109">
    <property type="entry name" value="DTBS"/>
    <property type="match status" value="1"/>
</dbReference>
<dbReference type="Gene3D" id="3.40.50.300">
    <property type="entry name" value="P-loop containing nucleotide triphosphate hydrolases"/>
    <property type="match status" value="1"/>
</dbReference>
<dbReference type="HAMAP" id="MF_00336">
    <property type="entry name" value="BioD"/>
    <property type="match status" value="1"/>
</dbReference>
<dbReference type="InterPro" id="IPR004472">
    <property type="entry name" value="DTB_synth_BioD"/>
</dbReference>
<dbReference type="InterPro" id="IPR027417">
    <property type="entry name" value="P-loop_NTPase"/>
</dbReference>
<dbReference type="NCBIfam" id="TIGR00347">
    <property type="entry name" value="bioD"/>
    <property type="match status" value="1"/>
</dbReference>
<dbReference type="PANTHER" id="PTHR43210:SF2">
    <property type="entry name" value="ATP-DEPENDENT DETHIOBIOTIN SYNTHETASE BIOD 2"/>
    <property type="match status" value="1"/>
</dbReference>
<dbReference type="PANTHER" id="PTHR43210">
    <property type="entry name" value="DETHIOBIOTIN SYNTHETASE"/>
    <property type="match status" value="1"/>
</dbReference>
<dbReference type="Pfam" id="PF13500">
    <property type="entry name" value="AAA_26"/>
    <property type="match status" value="1"/>
</dbReference>
<dbReference type="PIRSF" id="PIRSF006755">
    <property type="entry name" value="DTB_synth"/>
    <property type="match status" value="1"/>
</dbReference>
<dbReference type="SUPFAM" id="SSF52540">
    <property type="entry name" value="P-loop containing nucleoside triphosphate hydrolases"/>
    <property type="match status" value="1"/>
</dbReference>
<sequence>MNSRLIVTGTDTGIGKTVFSAALCHALGAVYWKPVQSGLEEETDSEIVARLAQASPQRILPEAWRLNTPASPHLSARLDGVEIRPEEMHIPATSLPLVIEGAGGLLVPLNDKTLFADLFAIWRIPAILCARAALGTINHTLLSLEAMRSRDIPVLGVAFIGEANEDTETTIAHLGRVKRLGRLPLLDDLSPEKLHHSFARNFHIDDFAGVAR</sequence>
<proteinExistence type="inferred from homology"/>
<organism>
    <name type="scientific">Brucella melitensis biotype 1 (strain ATCC 23456 / CCUG 17765 / NCTC 10094 / 16M)</name>
    <dbReference type="NCBI Taxonomy" id="224914"/>
    <lineage>
        <taxon>Bacteria</taxon>
        <taxon>Pseudomonadati</taxon>
        <taxon>Pseudomonadota</taxon>
        <taxon>Alphaproteobacteria</taxon>
        <taxon>Hyphomicrobiales</taxon>
        <taxon>Brucellaceae</taxon>
        <taxon>Brucella/Ochrobactrum group</taxon>
        <taxon>Brucella</taxon>
    </lineage>
</organism>
<name>BIOD_BRUME</name>